<organism>
    <name type="scientific">Arabidopsis thaliana</name>
    <name type="common">Mouse-ear cress</name>
    <dbReference type="NCBI Taxonomy" id="3702"/>
    <lineage>
        <taxon>Eukaryota</taxon>
        <taxon>Viridiplantae</taxon>
        <taxon>Streptophyta</taxon>
        <taxon>Embryophyta</taxon>
        <taxon>Tracheophyta</taxon>
        <taxon>Spermatophyta</taxon>
        <taxon>Magnoliopsida</taxon>
        <taxon>eudicotyledons</taxon>
        <taxon>Gunneridae</taxon>
        <taxon>Pentapetalae</taxon>
        <taxon>rosids</taxon>
        <taxon>malvids</taxon>
        <taxon>Brassicales</taxon>
        <taxon>Brassicaceae</taxon>
        <taxon>Camelineae</taxon>
        <taxon>Arabidopsis</taxon>
    </lineage>
</organism>
<evidence type="ECO:0000255" key="1"/>
<evidence type="ECO:0000255" key="2">
    <source>
        <dbReference type="PROSITE-ProRule" id="PRU00173"/>
    </source>
</evidence>
<evidence type="ECO:0000305" key="3"/>
<proteinExistence type="evidence at transcript level"/>
<feature type="transit peptide" description="Chloroplast" evidence="3">
    <location>
        <begin position="1"/>
        <end position="47"/>
    </location>
</feature>
<feature type="chain" id="PRO_0000416531" description="Rhodanese-like domain-containing protein 9, chloroplastic">
    <location>
        <begin position="48"/>
        <end position="234"/>
    </location>
</feature>
<feature type="transmembrane region" description="Helical" evidence="1">
    <location>
        <begin position="204"/>
        <end position="222"/>
    </location>
</feature>
<feature type="domain" description="Rhodanese" evidence="2">
    <location>
        <begin position="62"/>
        <end position="185"/>
    </location>
</feature>
<feature type="active site" description="Cysteine persulfide intermediate" evidence="2">
    <location>
        <position position="145"/>
    </location>
</feature>
<gene>
    <name type="primary">STR9</name>
    <name type="ordered locus">At2g42220</name>
    <name type="ORF">T24P15.13</name>
</gene>
<dbReference type="EMBL" id="AC002561">
    <property type="protein sequence ID" value="AAB88647.1"/>
    <property type="molecule type" value="Genomic_DNA"/>
</dbReference>
<dbReference type="EMBL" id="CP002685">
    <property type="protein sequence ID" value="AEC10090.1"/>
    <property type="molecule type" value="Genomic_DNA"/>
</dbReference>
<dbReference type="EMBL" id="AY045616">
    <property type="protein sequence ID" value="AAK73974.1"/>
    <property type="molecule type" value="mRNA"/>
</dbReference>
<dbReference type="PIR" id="T00931">
    <property type="entry name" value="T00931"/>
</dbReference>
<dbReference type="RefSeq" id="NP_565969.1">
    <property type="nucleotide sequence ID" value="NM_129784.3"/>
</dbReference>
<dbReference type="SMR" id="O48529"/>
<dbReference type="FunCoup" id="O48529">
    <property type="interactions" value="1022"/>
</dbReference>
<dbReference type="STRING" id="3702.O48529"/>
<dbReference type="iPTMnet" id="O48529"/>
<dbReference type="PaxDb" id="3702-AT2G42220.1"/>
<dbReference type="ProteomicsDB" id="228361"/>
<dbReference type="EnsemblPlants" id="AT2G42220.1">
    <property type="protein sequence ID" value="AT2G42220.1"/>
    <property type="gene ID" value="AT2G42220"/>
</dbReference>
<dbReference type="GeneID" id="818822"/>
<dbReference type="Gramene" id="AT2G42220.1">
    <property type="protein sequence ID" value="AT2G42220.1"/>
    <property type="gene ID" value="AT2G42220"/>
</dbReference>
<dbReference type="KEGG" id="ath:AT2G42220"/>
<dbReference type="Araport" id="AT2G42220"/>
<dbReference type="TAIR" id="AT2G42220"/>
<dbReference type="eggNOG" id="ENOG502QRX0">
    <property type="taxonomic scope" value="Eukaryota"/>
</dbReference>
<dbReference type="HOGENOM" id="CLU_089790_1_0_1"/>
<dbReference type="InParanoid" id="O48529"/>
<dbReference type="OMA" id="QRERAYI"/>
<dbReference type="OrthoDB" id="566238at2759"/>
<dbReference type="PhylomeDB" id="O48529"/>
<dbReference type="PRO" id="PR:O48529"/>
<dbReference type="Proteomes" id="UP000006548">
    <property type="component" value="Chromosome 2"/>
</dbReference>
<dbReference type="ExpressionAtlas" id="O48529">
    <property type="expression patterns" value="baseline and differential"/>
</dbReference>
<dbReference type="GO" id="GO:0009507">
    <property type="term" value="C:chloroplast"/>
    <property type="evidence" value="ECO:0007005"/>
    <property type="project" value="TAIR"/>
</dbReference>
<dbReference type="GO" id="GO:0009534">
    <property type="term" value="C:chloroplast thylakoid"/>
    <property type="evidence" value="ECO:0007005"/>
    <property type="project" value="TAIR"/>
</dbReference>
<dbReference type="GO" id="GO:0009535">
    <property type="term" value="C:chloroplast thylakoid membrane"/>
    <property type="evidence" value="ECO:0007005"/>
    <property type="project" value="TAIR"/>
</dbReference>
<dbReference type="GO" id="GO:0005829">
    <property type="term" value="C:cytosol"/>
    <property type="evidence" value="ECO:0007005"/>
    <property type="project" value="TAIR"/>
</dbReference>
<dbReference type="CDD" id="cd00158">
    <property type="entry name" value="RHOD"/>
    <property type="match status" value="1"/>
</dbReference>
<dbReference type="FunFam" id="3.40.250.10:FF:000038">
    <property type="entry name" value="Rhodanese-like domain-containing protein 9, chloroplastic"/>
    <property type="match status" value="1"/>
</dbReference>
<dbReference type="Gene3D" id="3.40.250.10">
    <property type="entry name" value="Rhodanese-like domain"/>
    <property type="match status" value="1"/>
</dbReference>
<dbReference type="InterPro" id="IPR001763">
    <property type="entry name" value="Rhodanese-like_dom"/>
</dbReference>
<dbReference type="InterPro" id="IPR036873">
    <property type="entry name" value="Rhodanese-like_dom_sf"/>
</dbReference>
<dbReference type="InterPro" id="IPR044615">
    <property type="entry name" value="STR9"/>
</dbReference>
<dbReference type="PANTHER" id="PTHR45508">
    <property type="entry name" value="RHODANESE-LIKE DOMAIN-CONTAINING PROTEIN 9, CHLOROPLASTIC"/>
    <property type="match status" value="1"/>
</dbReference>
<dbReference type="PANTHER" id="PTHR45508:SF1">
    <property type="entry name" value="RHODANESE-LIKE DOMAIN-CONTAINING PROTEIN 9, CHLOROPLASTIC"/>
    <property type="match status" value="1"/>
</dbReference>
<dbReference type="Pfam" id="PF00581">
    <property type="entry name" value="Rhodanese"/>
    <property type="match status" value="1"/>
</dbReference>
<dbReference type="SMART" id="SM00450">
    <property type="entry name" value="RHOD"/>
    <property type="match status" value="1"/>
</dbReference>
<dbReference type="SUPFAM" id="SSF52821">
    <property type="entry name" value="Rhodanese/Cell cycle control phosphatase"/>
    <property type="match status" value="1"/>
</dbReference>
<dbReference type="PROSITE" id="PS50206">
    <property type="entry name" value="RHODANESE_3"/>
    <property type="match status" value="1"/>
</dbReference>
<comment type="subcellular location">
    <subcellularLocation>
        <location evidence="3">Plastid</location>
        <location evidence="3">Chloroplast</location>
    </subcellularLocation>
    <subcellularLocation>
        <location evidence="3">Membrane</location>
        <topology evidence="3">Single-pass membrane protein</topology>
    </subcellularLocation>
</comment>
<sequence length="234" mass="25510">MAGIISPSPTALYFTSNVGGRRLKAVSWAGKSVSGNVIRRRSLRIAAELKFVNAEEAKQLIAEEGYSVVDVRDKTQFERAHIKSCSHIPLFIYNEDNDIGTIIKRTVHNNFSGLFFGLPFTKVNPEFLKSVRNEFSQDSKLLLVCQEGLRSAAAASRLEEAGYENIACVTSGLQSVKPGTFESVGSTELQNAGKAGLITIQGKISAVLGTVLVCAYLFIQFFPDQAEKLFPPTS</sequence>
<protein>
    <recommendedName>
        <fullName>Rhodanese-like domain-containing protein 9, chloroplastic</fullName>
    </recommendedName>
    <alternativeName>
        <fullName>Sulfurtransferase 9</fullName>
        <shortName>AtStr9</shortName>
    </alternativeName>
</protein>
<reference key="1">
    <citation type="journal article" date="1999" name="Nature">
        <title>Sequence and analysis of chromosome 2 of the plant Arabidopsis thaliana.</title>
        <authorList>
            <person name="Lin X."/>
            <person name="Kaul S."/>
            <person name="Rounsley S.D."/>
            <person name="Shea T.P."/>
            <person name="Benito M.-I."/>
            <person name="Town C.D."/>
            <person name="Fujii C.Y."/>
            <person name="Mason T.M."/>
            <person name="Bowman C.L."/>
            <person name="Barnstead M.E."/>
            <person name="Feldblyum T.V."/>
            <person name="Buell C.R."/>
            <person name="Ketchum K.A."/>
            <person name="Lee J.J."/>
            <person name="Ronning C.M."/>
            <person name="Koo H.L."/>
            <person name="Moffat K.S."/>
            <person name="Cronin L.A."/>
            <person name="Shen M."/>
            <person name="Pai G."/>
            <person name="Van Aken S."/>
            <person name="Umayam L."/>
            <person name="Tallon L.J."/>
            <person name="Gill J.E."/>
            <person name="Adams M.D."/>
            <person name="Carrera A.J."/>
            <person name="Creasy T.H."/>
            <person name="Goodman H.M."/>
            <person name="Somerville C.R."/>
            <person name="Copenhaver G.P."/>
            <person name="Preuss D."/>
            <person name="Nierman W.C."/>
            <person name="White O."/>
            <person name="Eisen J.A."/>
            <person name="Salzberg S.L."/>
            <person name="Fraser C.M."/>
            <person name="Venter J.C."/>
        </authorList>
    </citation>
    <scope>NUCLEOTIDE SEQUENCE [LARGE SCALE GENOMIC DNA]</scope>
    <source>
        <strain>cv. Columbia</strain>
    </source>
</reference>
<reference key="2">
    <citation type="journal article" date="2017" name="Plant J.">
        <title>Araport11: a complete reannotation of the Arabidopsis thaliana reference genome.</title>
        <authorList>
            <person name="Cheng C.Y."/>
            <person name="Krishnakumar V."/>
            <person name="Chan A.P."/>
            <person name="Thibaud-Nissen F."/>
            <person name="Schobel S."/>
            <person name="Town C.D."/>
        </authorList>
    </citation>
    <scope>GENOME REANNOTATION</scope>
    <source>
        <strain>cv. Columbia</strain>
    </source>
</reference>
<reference key="3">
    <citation type="journal article" date="2003" name="Science">
        <title>Empirical analysis of transcriptional activity in the Arabidopsis genome.</title>
        <authorList>
            <person name="Yamada K."/>
            <person name="Lim J."/>
            <person name="Dale J.M."/>
            <person name="Chen H."/>
            <person name="Shinn P."/>
            <person name="Palm C.J."/>
            <person name="Southwick A.M."/>
            <person name="Wu H.C."/>
            <person name="Kim C.J."/>
            <person name="Nguyen M."/>
            <person name="Pham P.K."/>
            <person name="Cheuk R.F."/>
            <person name="Karlin-Newmann G."/>
            <person name="Liu S.X."/>
            <person name="Lam B."/>
            <person name="Sakano H."/>
            <person name="Wu T."/>
            <person name="Yu G."/>
            <person name="Miranda M."/>
            <person name="Quach H.L."/>
            <person name="Tripp M."/>
            <person name="Chang C.H."/>
            <person name="Lee J.M."/>
            <person name="Toriumi M.J."/>
            <person name="Chan M.M."/>
            <person name="Tang C.C."/>
            <person name="Onodera C.S."/>
            <person name="Deng J.M."/>
            <person name="Akiyama K."/>
            <person name="Ansari Y."/>
            <person name="Arakawa T."/>
            <person name="Banh J."/>
            <person name="Banno F."/>
            <person name="Bowser L."/>
            <person name="Brooks S.Y."/>
            <person name="Carninci P."/>
            <person name="Chao Q."/>
            <person name="Choy N."/>
            <person name="Enju A."/>
            <person name="Goldsmith A.D."/>
            <person name="Gurjal M."/>
            <person name="Hansen N.F."/>
            <person name="Hayashizaki Y."/>
            <person name="Johnson-Hopson C."/>
            <person name="Hsuan V.W."/>
            <person name="Iida K."/>
            <person name="Karnes M."/>
            <person name="Khan S."/>
            <person name="Koesema E."/>
            <person name="Ishida J."/>
            <person name="Jiang P.X."/>
            <person name="Jones T."/>
            <person name="Kawai J."/>
            <person name="Kamiya A."/>
            <person name="Meyers C."/>
            <person name="Nakajima M."/>
            <person name="Narusaka M."/>
            <person name="Seki M."/>
            <person name="Sakurai T."/>
            <person name="Satou M."/>
            <person name="Tamse R."/>
            <person name="Vaysberg M."/>
            <person name="Wallender E.K."/>
            <person name="Wong C."/>
            <person name="Yamamura Y."/>
            <person name="Yuan S."/>
            <person name="Shinozaki K."/>
            <person name="Davis R.W."/>
            <person name="Theologis A."/>
            <person name="Ecker J.R."/>
        </authorList>
    </citation>
    <scope>NUCLEOTIDE SEQUENCE [LARGE SCALE MRNA] OF 8-234</scope>
    <source>
        <strain>cv. Columbia</strain>
    </source>
</reference>
<reference key="4">
    <citation type="journal article" date="2007" name="Plant Physiol. Biochem.">
        <title>Differential expression of Arabidopsis sulfurtransferases under various growth conditions.</title>
        <authorList>
            <person name="Bartels A."/>
            <person name="Mock H.P."/>
            <person name="Papenbrock J."/>
        </authorList>
    </citation>
    <scope>GENE FAMILY</scope>
    <scope>NOMENCLATURE</scope>
</reference>
<keyword id="KW-0150">Chloroplast</keyword>
<keyword id="KW-0472">Membrane</keyword>
<keyword id="KW-0934">Plastid</keyword>
<keyword id="KW-1185">Reference proteome</keyword>
<keyword id="KW-0809">Transit peptide</keyword>
<keyword id="KW-0812">Transmembrane</keyword>
<keyword id="KW-1133">Transmembrane helix</keyword>
<name>STR9_ARATH</name>
<accession>O48529</accession>
<accession>Q94AY4</accession>